<protein>
    <recommendedName>
        <fullName evidence="1">Uridine kinase</fullName>
        <ecNumber evidence="1">2.7.1.48</ecNumber>
    </recommendedName>
    <alternativeName>
        <fullName evidence="1">Cytidine monophosphokinase</fullName>
    </alternativeName>
    <alternativeName>
        <fullName evidence="1">Uridine monophosphokinase</fullName>
    </alternativeName>
</protein>
<dbReference type="EC" id="2.7.1.48" evidence="1"/>
<dbReference type="EMBL" id="CP000901">
    <property type="protein sequence ID" value="ABX87355.1"/>
    <property type="molecule type" value="Genomic_DNA"/>
</dbReference>
<dbReference type="RefSeq" id="WP_002211872.1">
    <property type="nucleotide sequence ID" value="NZ_CP009935.1"/>
</dbReference>
<dbReference type="SMR" id="A9R2M5"/>
<dbReference type="GeneID" id="57977044"/>
<dbReference type="KEGG" id="ypg:YpAngola_A3195"/>
<dbReference type="PATRIC" id="fig|349746.12.peg.4256"/>
<dbReference type="UniPathway" id="UPA00574">
    <property type="reaction ID" value="UER00637"/>
</dbReference>
<dbReference type="UniPathway" id="UPA00579">
    <property type="reaction ID" value="UER00640"/>
</dbReference>
<dbReference type="GO" id="GO:0005737">
    <property type="term" value="C:cytoplasm"/>
    <property type="evidence" value="ECO:0007669"/>
    <property type="project" value="UniProtKB-SubCell"/>
</dbReference>
<dbReference type="GO" id="GO:0005524">
    <property type="term" value="F:ATP binding"/>
    <property type="evidence" value="ECO:0007669"/>
    <property type="project" value="UniProtKB-UniRule"/>
</dbReference>
<dbReference type="GO" id="GO:0043771">
    <property type="term" value="F:cytidine kinase activity"/>
    <property type="evidence" value="ECO:0007669"/>
    <property type="project" value="RHEA"/>
</dbReference>
<dbReference type="GO" id="GO:0004849">
    <property type="term" value="F:uridine kinase activity"/>
    <property type="evidence" value="ECO:0007669"/>
    <property type="project" value="UniProtKB-UniRule"/>
</dbReference>
<dbReference type="GO" id="GO:0044211">
    <property type="term" value="P:CTP salvage"/>
    <property type="evidence" value="ECO:0007669"/>
    <property type="project" value="UniProtKB-UniRule"/>
</dbReference>
<dbReference type="GO" id="GO:0044206">
    <property type="term" value="P:UMP salvage"/>
    <property type="evidence" value="ECO:0007669"/>
    <property type="project" value="UniProtKB-UniRule"/>
</dbReference>
<dbReference type="CDD" id="cd02023">
    <property type="entry name" value="UMPK"/>
    <property type="match status" value="1"/>
</dbReference>
<dbReference type="FunFam" id="3.40.50.300:FF:000252">
    <property type="entry name" value="Uridine kinase"/>
    <property type="match status" value="1"/>
</dbReference>
<dbReference type="Gene3D" id="3.40.50.300">
    <property type="entry name" value="P-loop containing nucleotide triphosphate hydrolases"/>
    <property type="match status" value="1"/>
</dbReference>
<dbReference type="HAMAP" id="MF_00551">
    <property type="entry name" value="Uridine_kinase"/>
    <property type="match status" value="1"/>
</dbReference>
<dbReference type="InterPro" id="IPR027417">
    <property type="entry name" value="P-loop_NTPase"/>
</dbReference>
<dbReference type="InterPro" id="IPR006083">
    <property type="entry name" value="PRK/URK"/>
</dbReference>
<dbReference type="InterPro" id="IPR026008">
    <property type="entry name" value="Uridine_kinase"/>
</dbReference>
<dbReference type="InterPro" id="IPR000764">
    <property type="entry name" value="Uridine_kinase-like"/>
</dbReference>
<dbReference type="NCBIfam" id="NF004018">
    <property type="entry name" value="PRK05480.1"/>
    <property type="match status" value="1"/>
</dbReference>
<dbReference type="NCBIfam" id="TIGR00235">
    <property type="entry name" value="udk"/>
    <property type="match status" value="1"/>
</dbReference>
<dbReference type="PANTHER" id="PTHR10285">
    <property type="entry name" value="URIDINE KINASE"/>
    <property type="match status" value="1"/>
</dbReference>
<dbReference type="Pfam" id="PF00485">
    <property type="entry name" value="PRK"/>
    <property type="match status" value="1"/>
</dbReference>
<dbReference type="PRINTS" id="PR00988">
    <property type="entry name" value="URIDINKINASE"/>
</dbReference>
<dbReference type="SUPFAM" id="SSF52540">
    <property type="entry name" value="P-loop containing nucleoside triphosphate hydrolases"/>
    <property type="match status" value="1"/>
</dbReference>
<comment type="catalytic activity">
    <reaction evidence="1">
        <text>uridine + ATP = UMP + ADP + H(+)</text>
        <dbReference type="Rhea" id="RHEA:16825"/>
        <dbReference type="ChEBI" id="CHEBI:15378"/>
        <dbReference type="ChEBI" id="CHEBI:16704"/>
        <dbReference type="ChEBI" id="CHEBI:30616"/>
        <dbReference type="ChEBI" id="CHEBI:57865"/>
        <dbReference type="ChEBI" id="CHEBI:456216"/>
        <dbReference type="EC" id="2.7.1.48"/>
    </reaction>
</comment>
<comment type="catalytic activity">
    <reaction evidence="1">
        <text>cytidine + ATP = CMP + ADP + H(+)</text>
        <dbReference type="Rhea" id="RHEA:24674"/>
        <dbReference type="ChEBI" id="CHEBI:15378"/>
        <dbReference type="ChEBI" id="CHEBI:17562"/>
        <dbReference type="ChEBI" id="CHEBI:30616"/>
        <dbReference type="ChEBI" id="CHEBI:60377"/>
        <dbReference type="ChEBI" id="CHEBI:456216"/>
        <dbReference type="EC" id="2.7.1.48"/>
    </reaction>
</comment>
<comment type="pathway">
    <text evidence="1">Pyrimidine metabolism; CTP biosynthesis via salvage pathway; CTP from cytidine: step 1/3.</text>
</comment>
<comment type="pathway">
    <text evidence="1">Pyrimidine metabolism; UMP biosynthesis via salvage pathway; UMP from uridine: step 1/1.</text>
</comment>
<comment type="subcellular location">
    <subcellularLocation>
        <location evidence="1">Cytoplasm</location>
    </subcellularLocation>
</comment>
<comment type="similarity">
    <text evidence="1">Belongs to the uridine kinase family.</text>
</comment>
<organism>
    <name type="scientific">Yersinia pestis bv. Antiqua (strain Angola)</name>
    <dbReference type="NCBI Taxonomy" id="349746"/>
    <lineage>
        <taxon>Bacteria</taxon>
        <taxon>Pseudomonadati</taxon>
        <taxon>Pseudomonadota</taxon>
        <taxon>Gammaproteobacteria</taxon>
        <taxon>Enterobacterales</taxon>
        <taxon>Yersiniaceae</taxon>
        <taxon>Yersinia</taxon>
    </lineage>
</organism>
<reference key="1">
    <citation type="journal article" date="2010" name="J. Bacteriol.">
        <title>Genome sequence of the deep-rooted Yersinia pestis strain Angola reveals new insights into the evolution and pangenome of the plague bacterium.</title>
        <authorList>
            <person name="Eppinger M."/>
            <person name="Worsham P.L."/>
            <person name="Nikolich M.P."/>
            <person name="Riley D.R."/>
            <person name="Sebastian Y."/>
            <person name="Mou S."/>
            <person name="Achtman M."/>
            <person name="Lindler L.E."/>
            <person name="Ravel J."/>
        </authorList>
    </citation>
    <scope>NUCLEOTIDE SEQUENCE [LARGE SCALE GENOMIC DNA]</scope>
    <source>
        <strain>Angola</strain>
    </source>
</reference>
<feature type="chain" id="PRO_1000129098" description="Uridine kinase">
    <location>
        <begin position="1"/>
        <end position="213"/>
    </location>
</feature>
<feature type="binding site" evidence="1">
    <location>
        <begin position="15"/>
        <end position="22"/>
    </location>
    <ligand>
        <name>ATP</name>
        <dbReference type="ChEBI" id="CHEBI:30616"/>
    </ligand>
</feature>
<gene>
    <name evidence="1" type="primary">udk</name>
    <name type="ordered locus">YpAngola_A3195</name>
</gene>
<proteinExistence type="inferred from homology"/>
<name>URK_YERPG</name>
<evidence type="ECO:0000255" key="1">
    <source>
        <dbReference type="HAMAP-Rule" id="MF_00551"/>
    </source>
</evidence>
<sequence>MTDKAHQCVIIGIAGASASGKSLIASTLYRELREQVGDQHIGVIPEDGYYKDQSHLSMEERVKTNYDHPSAMDHNLLLEHLQALKAGKPVELPLYSYTEHTRKKETVHLEPKKVIILEGILLLTDIRLRQEMNFSIFVDTPLDICLMRRMKRDVNERGRSMDSVMAQYQKTVRPMFLQFIEPSKQYADIIVPRGGKNRIAIDILKAKISQFFE</sequence>
<accession>A9R2M5</accession>
<keyword id="KW-0067">ATP-binding</keyword>
<keyword id="KW-0963">Cytoplasm</keyword>
<keyword id="KW-0418">Kinase</keyword>
<keyword id="KW-0547">Nucleotide-binding</keyword>
<keyword id="KW-0808">Transferase</keyword>